<protein>
    <recommendedName>
        <fullName evidence="1">Phosphonoacetaldehyde hydrolase</fullName>
        <shortName evidence="1">Phosphonatase</shortName>
        <ecNumber evidence="1">3.11.1.1</ecNumber>
    </recommendedName>
    <alternativeName>
        <fullName evidence="1">Phosphonoacetaldehyde phosphonohydrolase</fullName>
    </alternativeName>
</protein>
<evidence type="ECO:0000255" key="1">
    <source>
        <dbReference type="HAMAP-Rule" id="MF_01375"/>
    </source>
</evidence>
<accession>B2T4N1</accession>
<keyword id="KW-0378">Hydrolase</keyword>
<keyword id="KW-0460">Magnesium</keyword>
<keyword id="KW-0479">Metal-binding</keyword>
<keyword id="KW-0704">Schiff base</keyword>
<name>PHNX_PARPJ</name>
<gene>
    <name evidence="1" type="primary">phnX</name>
    <name type="ordered locus">Bphyt_2141</name>
</gene>
<comment type="function">
    <text evidence="1">Involved in phosphonate degradation.</text>
</comment>
<comment type="catalytic activity">
    <reaction evidence="1">
        <text>phosphonoacetaldehyde + H2O = acetaldehyde + phosphate + H(+)</text>
        <dbReference type="Rhea" id="RHEA:18905"/>
        <dbReference type="ChEBI" id="CHEBI:15343"/>
        <dbReference type="ChEBI" id="CHEBI:15377"/>
        <dbReference type="ChEBI" id="CHEBI:15378"/>
        <dbReference type="ChEBI" id="CHEBI:43474"/>
        <dbReference type="ChEBI" id="CHEBI:58383"/>
        <dbReference type="EC" id="3.11.1.1"/>
    </reaction>
</comment>
<comment type="cofactor">
    <cofactor evidence="1">
        <name>Mg(2+)</name>
        <dbReference type="ChEBI" id="CHEBI:18420"/>
    </cofactor>
    <text evidence="1">Binds 1 Mg(2+) ion per subunit.</text>
</comment>
<comment type="subunit">
    <text evidence="1">Homodimer.</text>
</comment>
<comment type="similarity">
    <text evidence="1">Belongs to the HAD-like hydrolase superfamily. PhnX family.</text>
</comment>
<sequence length="267" mass="28396">MKHVKAVIFDWAGTVVDYGSLAPMGAFVETFEQFGVSITIDEARGPMGMAKRPHIAALMALPRVAQAWADKYGHAPGEADIDAVYDVFVPKNIAVAASYSSVIPGVADVASALRSDDIRIGTTTGYTREIMAEIVPGAAAQGFSPDSIVCTGDTPEGRPSPYMIYKTLPELGVWRAKDAIKVDDTEVGIEEGINGGTWAVGVAVSGNAFGMAENDVKALAPHEFAWRRKAATEKLKAAGAHYVIDSVADLMPVVYDIEARLARGERP</sequence>
<reference key="1">
    <citation type="journal article" date="2011" name="J. Bacteriol.">
        <title>Complete genome sequence of the plant growth-promoting endophyte Burkholderia phytofirmans strain PsJN.</title>
        <authorList>
            <person name="Weilharter A."/>
            <person name="Mitter B."/>
            <person name="Shin M.V."/>
            <person name="Chain P.S."/>
            <person name="Nowak J."/>
            <person name="Sessitsch A."/>
        </authorList>
    </citation>
    <scope>NUCLEOTIDE SEQUENCE [LARGE SCALE GENOMIC DNA]</scope>
    <source>
        <strain>DSM 17436 / LMG 22146 / PsJN</strain>
    </source>
</reference>
<feature type="chain" id="PRO_1000144831" description="Phosphonoacetaldehyde hydrolase">
    <location>
        <begin position="1"/>
        <end position="267"/>
    </location>
</feature>
<feature type="active site" description="Nucleophile" evidence="1">
    <location>
        <position position="10"/>
    </location>
</feature>
<feature type="active site" description="Schiff-base intermediate with substrate" evidence="1">
    <location>
        <position position="51"/>
    </location>
</feature>
<feature type="binding site" evidence="1">
    <location>
        <position position="10"/>
    </location>
    <ligand>
        <name>Mg(2+)</name>
        <dbReference type="ChEBI" id="CHEBI:18420"/>
    </ligand>
</feature>
<feature type="binding site" evidence="1">
    <location>
        <position position="12"/>
    </location>
    <ligand>
        <name>Mg(2+)</name>
        <dbReference type="ChEBI" id="CHEBI:18420"/>
    </ligand>
</feature>
<feature type="binding site" evidence="1">
    <location>
        <position position="184"/>
    </location>
    <ligand>
        <name>Mg(2+)</name>
        <dbReference type="ChEBI" id="CHEBI:18420"/>
    </ligand>
</feature>
<dbReference type="EC" id="3.11.1.1" evidence="1"/>
<dbReference type="EMBL" id="CP001052">
    <property type="protein sequence ID" value="ACD16542.1"/>
    <property type="molecule type" value="Genomic_DNA"/>
</dbReference>
<dbReference type="RefSeq" id="WP_012433141.1">
    <property type="nucleotide sequence ID" value="NC_010681.1"/>
</dbReference>
<dbReference type="SMR" id="B2T4N1"/>
<dbReference type="STRING" id="398527.Bphyt_2141"/>
<dbReference type="KEGG" id="bpy:Bphyt_2141"/>
<dbReference type="eggNOG" id="COG0637">
    <property type="taxonomic scope" value="Bacteria"/>
</dbReference>
<dbReference type="HOGENOM" id="CLU_045011_12_0_4"/>
<dbReference type="OrthoDB" id="5504491at2"/>
<dbReference type="Proteomes" id="UP000001739">
    <property type="component" value="Chromosome 1"/>
</dbReference>
<dbReference type="GO" id="GO:0005829">
    <property type="term" value="C:cytosol"/>
    <property type="evidence" value="ECO:0007669"/>
    <property type="project" value="TreeGrafter"/>
</dbReference>
<dbReference type="GO" id="GO:0000287">
    <property type="term" value="F:magnesium ion binding"/>
    <property type="evidence" value="ECO:0007669"/>
    <property type="project" value="UniProtKB-UniRule"/>
</dbReference>
<dbReference type="GO" id="GO:0008967">
    <property type="term" value="F:phosphoglycolate phosphatase activity"/>
    <property type="evidence" value="ECO:0007669"/>
    <property type="project" value="TreeGrafter"/>
</dbReference>
<dbReference type="GO" id="GO:0050194">
    <property type="term" value="F:phosphonoacetaldehyde hydrolase activity"/>
    <property type="evidence" value="ECO:0007669"/>
    <property type="project" value="UniProtKB-UniRule"/>
</dbReference>
<dbReference type="GO" id="GO:0006281">
    <property type="term" value="P:DNA repair"/>
    <property type="evidence" value="ECO:0007669"/>
    <property type="project" value="TreeGrafter"/>
</dbReference>
<dbReference type="GO" id="GO:0019700">
    <property type="term" value="P:organic phosphonate catabolic process"/>
    <property type="evidence" value="ECO:0007669"/>
    <property type="project" value="InterPro"/>
</dbReference>
<dbReference type="CDD" id="cd02586">
    <property type="entry name" value="HAD_PHN"/>
    <property type="match status" value="1"/>
</dbReference>
<dbReference type="FunFam" id="1.10.150.240:FF:000006">
    <property type="entry name" value="Phosphonoacetaldehyde hydrolase"/>
    <property type="match status" value="1"/>
</dbReference>
<dbReference type="Gene3D" id="3.40.50.1000">
    <property type="entry name" value="HAD superfamily/HAD-like"/>
    <property type="match status" value="1"/>
</dbReference>
<dbReference type="Gene3D" id="1.10.150.240">
    <property type="entry name" value="Putative phosphatase, domain 2"/>
    <property type="match status" value="1"/>
</dbReference>
<dbReference type="HAMAP" id="MF_01375">
    <property type="entry name" value="PhnX"/>
    <property type="match status" value="1"/>
</dbReference>
<dbReference type="InterPro" id="IPR050155">
    <property type="entry name" value="HAD-like_hydrolase_sf"/>
</dbReference>
<dbReference type="InterPro" id="IPR036412">
    <property type="entry name" value="HAD-like_sf"/>
</dbReference>
<dbReference type="InterPro" id="IPR023214">
    <property type="entry name" value="HAD_sf"/>
</dbReference>
<dbReference type="InterPro" id="IPR023198">
    <property type="entry name" value="PGP-like_dom2"/>
</dbReference>
<dbReference type="InterPro" id="IPR006323">
    <property type="entry name" value="Phosphonoacetald_hydro"/>
</dbReference>
<dbReference type="NCBIfam" id="TIGR01422">
    <property type="entry name" value="phosphonatase"/>
    <property type="match status" value="1"/>
</dbReference>
<dbReference type="PANTHER" id="PTHR43434">
    <property type="entry name" value="PHOSPHOGLYCOLATE PHOSPHATASE"/>
    <property type="match status" value="1"/>
</dbReference>
<dbReference type="PANTHER" id="PTHR43434:SF19">
    <property type="entry name" value="PHOSPHONOACETALDEHYDE HYDROLASE"/>
    <property type="match status" value="1"/>
</dbReference>
<dbReference type="Pfam" id="PF00702">
    <property type="entry name" value="Hydrolase"/>
    <property type="match status" value="1"/>
</dbReference>
<dbReference type="SFLD" id="SFLDG01129">
    <property type="entry name" value="C1.5:_HAD__Beta-PGM__Phosphata"/>
    <property type="match status" value="1"/>
</dbReference>
<dbReference type="SFLD" id="SFLDS00003">
    <property type="entry name" value="Haloacid_Dehalogenase"/>
    <property type="match status" value="1"/>
</dbReference>
<dbReference type="SUPFAM" id="SSF56784">
    <property type="entry name" value="HAD-like"/>
    <property type="match status" value="1"/>
</dbReference>
<proteinExistence type="inferred from homology"/>
<organism>
    <name type="scientific">Paraburkholderia phytofirmans (strain DSM 17436 / LMG 22146 / PsJN)</name>
    <name type="common">Burkholderia phytofirmans</name>
    <dbReference type="NCBI Taxonomy" id="398527"/>
    <lineage>
        <taxon>Bacteria</taxon>
        <taxon>Pseudomonadati</taxon>
        <taxon>Pseudomonadota</taxon>
        <taxon>Betaproteobacteria</taxon>
        <taxon>Burkholderiales</taxon>
        <taxon>Burkholderiaceae</taxon>
        <taxon>Paraburkholderia</taxon>
    </lineage>
</organism>